<proteinExistence type="inferred from homology"/>
<name>6PGL_SALEP</name>
<comment type="function">
    <text evidence="1">Catalyzes the hydrolysis of 6-phosphogluconolactone to 6-phosphogluconate.</text>
</comment>
<comment type="catalytic activity">
    <reaction evidence="1">
        <text>6-phospho-D-glucono-1,5-lactone + H2O = 6-phospho-D-gluconate + H(+)</text>
        <dbReference type="Rhea" id="RHEA:12556"/>
        <dbReference type="ChEBI" id="CHEBI:15377"/>
        <dbReference type="ChEBI" id="CHEBI:15378"/>
        <dbReference type="ChEBI" id="CHEBI:57955"/>
        <dbReference type="ChEBI" id="CHEBI:58759"/>
        <dbReference type="EC" id="3.1.1.31"/>
    </reaction>
</comment>
<comment type="pathway">
    <text evidence="1">Carbohydrate degradation; pentose phosphate pathway; D-ribulose 5-phosphate from D-glucose 6-phosphate (oxidative stage): step 2/3.</text>
</comment>
<comment type="similarity">
    <text evidence="1">Belongs to the cycloisomerase 2 family.</text>
</comment>
<gene>
    <name evidence="1" type="primary">pgl</name>
    <name type="ordered locus">SEN0730</name>
</gene>
<dbReference type="EC" id="3.1.1.31" evidence="1"/>
<dbReference type="EMBL" id="AM933172">
    <property type="protein sequence ID" value="CAR32316.1"/>
    <property type="molecule type" value="Genomic_DNA"/>
</dbReference>
<dbReference type="RefSeq" id="WP_000815468.1">
    <property type="nucleotide sequence ID" value="NC_011294.1"/>
</dbReference>
<dbReference type="SMR" id="B5QX56"/>
<dbReference type="KEGG" id="set:SEN0730"/>
<dbReference type="HOGENOM" id="CLU_038716_2_0_6"/>
<dbReference type="UniPathway" id="UPA00115">
    <property type="reaction ID" value="UER00409"/>
</dbReference>
<dbReference type="Proteomes" id="UP000000613">
    <property type="component" value="Chromosome"/>
</dbReference>
<dbReference type="GO" id="GO:0005829">
    <property type="term" value="C:cytosol"/>
    <property type="evidence" value="ECO:0007669"/>
    <property type="project" value="TreeGrafter"/>
</dbReference>
<dbReference type="GO" id="GO:0017057">
    <property type="term" value="F:6-phosphogluconolactonase activity"/>
    <property type="evidence" value="ECO:0007669"/>
    <property type="project" value="UniProtKB-UniRule"/>
</dbReference>
<dbReference type="GO" id="GO:0006006">
    <property type="term" value="P:glucose metabolic process"/>
    <property type="evidence" value="ECO:0007669"/>
    <property type="project" value="UniProtKB-KW"/>
</dbReference>
<dbReference type="GO" id="GO:0009051">
    <property type="term" value="P:pentose-phosphate shunt, oxidative branch"/>
    <property type="evidence" value="ECO:0007669"/>
    <property type="project" value="UniProtKB-UniRule"/>
</dbReference>
<dbReference type="FunFam" id="2.130.10.10:FF:000051">
    <property type="entry name" value="6-phosphogluconolactonase"/>
    <property type="match status" value="1"/>
</dbReference>
<dbReference type="Gene3D" id="2.130.10.10">
    <property type="entry name" value="YVTN repeat-like/Quinoprotein amine dehydrogenase"/>
    <property type="match status" value="1"/>
</dbReference>
<dbReference type="HAMAP" id="MF_01605">
    <property type="entry name" value="6P_gluconolactonase"/>
    <property type="match status" value="1"/>
</dbReference>
<dbReference type="InterPro" id="IPR022528">
    <property type="entry name" value="6-phosphogluconolactonase_YbhE"/>
</dbReference>
<dbReference type="InterPro" id="IPR050282">
    <property type="entry name" value="Cycloisomerase_2"/>
</dbReference>
<dbReference type="InterPro" id="IPR019405">
    <property type="entry name" value="Lactonase_7-beta_prop"/>
</dbReference>
<dbReference type="InterPro" id="IPR011045">
    <property type="entry name" value="N2O_reductase_N"/>
</dbReference>
<dbReference type="InterPro" id="IPR015943">
    <property type="entry name" value="WD40/YVTN_repeat-like_dom_sf"/>
</dbReference>
<dbReference type="NCBIfam" id="NF008258">
    <property type="entry name" value="PRK11028.1"/>
    <property type="match status" value="1"/>
</dbReference>
<dbReference type="PANTHER" id="PTHR30344:SF1">
    <property type="entry name" value="6-PHOSPHOGLUCONOLACTONASE"/>
    <property type="match status" value="1"/>
</dbReference>
<dbReference type="PANTHER" id="PTHR30344">
    <property type="entry name" value="6-PHOSPHOGLUCONOLACTONASE-RELATED"/>
    <property type="match status" value="1"/>
</dbReference>
<dbReference type="Pfam" id="PF10282">
    <property type="entry name" value="Lactonase"/>
    <property type="match status" value="1"/>
</dbReference>
<dbReference type="SUPFAM" id="SSF50974">
    <property type="entry name" value="Nitrous oxide reductase, N-terminal domain"/>
    <property type="match status" value="2"/>
</dbReference>
<protein>
    <recommendedName>
        <fullName evidence="1">6-phosphogluconolactonase</fullName>
        <shortName evidence="1">6-P-gluconolactonase</shortName>
        <ecNumber evidence="1">3.1.1.31</ecNumber>
    </recommendedName>
</protein>
<accession>B5QX56</accession>
<reference key="1">
    <citation type="journal article" date="2008" name="Genome Res.">
        <title>Comparative genome analysis of Salmonella enteritidis PT4 and Salmonella gallinarum 287/91 provides insights into evolutionary and host adaptation pathways.</title>
        <authorList>
            <person name="Thomson N.R."/>
            <person name="Clayton D.J."/>
            <person name="Windhorst D."/>
            <person name="Vernikos G."/>
            <person name="Davidson S."/>
            <person name="Churcher C."/>
            <person name="Quail M.A."/>
            <person name="Stevens M."/>
            <person name="Jones M.A."/>
            <person name="Watson M."/>
            <person name="Barron A."/>
            <person name="Layton A."/>
            <person name="Pickard D."/>
            <person name="Kingsley R.A."/>
            <person name="Bignell A."/>
            <person name="Clark L."/>
            <person name="Harris B."/>
            <person name="Ormond D."/>
            <person name="Abdellah Z."/>
            <person name="Brooks K."/>
            <person name="Cherevach I."/>
            <person name="Chillingworth T."/>
            <person name="Woodward J."/>
            <person name="Norberczak H."/>
            <person name="Lord A."/>
            <person name="Arrowsmith C."/>
            <person name="Jagels K."/>
            <person name="Moule S."/>
            <person name="Mungall K."/>
            <person name="Saunders M."/>
            <person name="Whitehead S."/>
            <person name="Chabalgoity J.A."/>
            <person name="Maskell D."/>
            <person name="Humphreys T."/>
            <person name="Roberts M."/>
            <person name="Barrow P.A."/>
            <person name="Dougan G."/>
            <person name="Parkhill J."/>
        </authorList>
    </citation>
    <scope>NUCLEOTIDE SEQUENCE [LARGE SCALE GENOMIC DNA]</scope>
    <source>
        <strain>P125109</strain>
    </source>
</reference>
<keyword id="KW-0119">Carbohydrate metabolism</keyword>
<keyword id="KW-0313">Glucose metabolism</keyword>
<keyword id="KW-0378">Hydrolase</keyword>
<organism>
    <name type="scientific">Salmonella enteritidis PT4 (strain P125109)</name>
    <dbReference type="NCBI Taxonomy" id="550537"/>
    <lineage>
        <taxon>Bacteria</taxon>
        <taxon>Pseudomonadati</taxon>
        <taxon>Pseudomonadota</taxon>
        <taxon>Gammaproteobacteria</taxon>
        <taxon>Enterobacterales</taxon>
        <taxon>Enterobacteriaceae</taxon>
        <taxon>Salmonella</taxon>
    </lineage>
</organism>
<evidence type="ECO:0000255" key="1">
    <source>
        <dbReference type="HAMAP-Rule" id="MF_01605"/>
    </source>
</evidence>
<sequence length="331" mass="36337">MKQTVYTASPESQQIHVWSLNHEGTLTLVQVVDVPGQVQPMVVSPDKRYLYVGVRPEFRVLAYRIAPDDGALTFAAESALPGSPTHISTDHHGRFVFVGSYNAGNVSVTRLQDGLPVELVDVVEGLDGCHSANITPDNRTLWVPALKQDRICLFTLSDDGHLVAQEPAEVNTVEGAGPRHMVFHPNRQYAYCVNELNSSVDVWQLKNPHGEIECVQTLDMMPADFSDTRWAADIHITPDGRHLYACDRTASLITVFSVSEDGSVLSVEGFQPTEAQPRGFNIDNSGKYLIAAGQKSHHIAVYEITGTQGLLTEKGRYAVGQGPMWVVVNAY</sequence>
<feature type="chain" id="PRO_1000148163" description="6-phosphogluconolactonase">
    <location>
        <begin position="1"/>
        <end position="331"/>
    </location>
</feature>